<name>UQCC4_XENTR</name>
<proteinExistence type="inferred from homology"/>
<evidence type="ECO:0000250" key="1">
    <source>
        <dbReference type="UniProtKB" id="Q6RUT7"/>
    </source>
</evidence>
<evidence type="ECO:0000255" key="2"/>
<evidence type="ECO:0000305" key="3"/>
<organism>
    <name type="scientific">Xenopus tropicalis</name>
    <name type="common">Western clawed frog</name>
    <name type="synonym">Silurana tropicalis</name>
    <dbReference type="NCBI Taxonomy" id="8364"/>
    <lineage>
        <taxon>Eukaryota</taxon>
        <taxon>Metazoa</taxon>
        <taxon>Chordata</taxon>
        <taxon>Craniata</taxon>
        <taxon>Vertebrata</taxon>
        <taxon>Euteleostomi</taxon>
        <taxon>Amphibia</taxon>
        <taxon>Batrachia</taxon>
        <taxon>Anura</taxon>
        <taxon>Pipoidea</taxon>
        <taxon>Pipidae</taxon>
        <taxon>Xenopodinae</taxon>
        <taxon>Xenopus</taxon>
        <taxon>Silurana</taxon>
    </lineage>
</organism>
<sequence>MWGSLCKAPLLRLRPTFAAVSNVKTIHIKASPDYNEGIDKSKPLKFSTSKASHRHWTVAKSLGSNQQRPWWKVVPLSVFLTTVLLWAIFRKETDIDEAIYKPIEQLQDESENK</sequence>
<reference key="1">
    <citation type="submission" date="2006-10" db="EMBL/GenBank/DDBJ databases">
        <authorList>
            <consortium name="Sanger Xenopus tropicalis EST/cDNA project"/>
        </authorList>
    </citation>
    <scope>NUCLEOTIDE SEQUENCE [LARGE SCALE MRNA]</scope>
    <source>
        <tissue>Egg</tissue>
    </source>
</reference>
<reference key="2">
    <citation type="submission" date="2007-11" db="EMBL/GenBank/DDBJ databases">
        <authorList>
            <consortium name="NIH - Xenopus Gene Collection (XGC) project"/>
        </authorList>
    </citation>
    <scope>NUCLEOTIDE SEQUENCE [LARGE SCALE MRNA]</scope>
    <source>
        <strain>PopA</strain>
    </source>
</reference>
<gene>
    <name type="primary">uqcc4</name>
    <name type="synonym">ccsmst1</name>
    <name type="ORF">TEgg066f10.1</name>
</gene>
<dbReference type="EMBL" id="CR761152">
    <property type="protein sequence ID" value="CAJ82103.1"/>
    <property type="molecule type" value="mRNA"/>
</dbReference>
<dbReference type="EMBL" id="BC154858">
    <property type="protein sequence ID" value="AAI54859.1"/>
    <property type="molecule type" value="mRNA"/>
</dbReference>
<dbReference type="RefSeq" id="NP_001106516.1">
    <property type="nucleotide sequence ID" value="NM_001113045.1"/>
</dbReference>
<dbReference type="FunCoup" id="A8WGU8">
    <property type="interactions" value="435"/>
</dbReference>
<dbReference type="STRING" id="8364.ENSXETP00000044421"/>
<dbReference type="PaxDb" id="8364-ENSXETP00000043128"/>
<dbReference type="GeneID" id="733536"/>
<dbReference type="KEGG" id="xtr:733536"/>
<dbReference type="AGR" id="Xenbase:XB-GENE-877214"/>
<dbReference type="CTD" id="283951"/>
<dbReference type="Xenbase" id="XB-GENE-877214">
    <property type="gene designation" value="uqcc4"/>
</dbReference>
<dbReference type="eggNOG" id="ENOG502S8XX">
    <property type="taxonomic scope" value="Eukaryota"/>
</dbReference>
<dbReference type="HOGENOM" id="CLU_2132769_0_0_1"/>
<dbReference type="InParanoid" id="A8WGU8"/>
<dbReference type="OrthoDB" id="5783753at2759"/>
<dbReference type="TreeFam" id="TF343850"/>
<dbReference type="Proteomes" id="UP000008143">
    <property type="component" value="Chromosome 9"/>
</dbReference>
<dbReference type="Bgee" id="ENSXETG00000019929">
    <property type="expression patterns" value="Expressed in egg cell and 13 other cell types or tissues"/>
</dbReference>
<dbReference type="GO" id="GO:0005743">
    <property type="term" value="C:mitochondrial inner membrane"/>
    <property type="evidence" value="ECO:0000250"/>
    <property type="project" value="UniProtKB"/>
</dbReference>
<dbReference type="GO" id="GO:0034551">
    <property type="term" value="P:mitochondrial respiratory chain complex III assembly"/>
    <property type="evidence" value="ECO:0000250"/>
    <property type="project" value="UniProtKB"/>
</dbReference>
<dbReference type="InterPro" id="IPR029160">
    <property type="entry name" value="UQCC4"/>
</dbReference>
<dbReference type="InterPro" id="IPR023248">
    <property type="entry name" value="UQCC4_vert"/>
</dbReference>
<dbReference type="PANTHER" id="PTHR35268">
    <property type="entry name" value="PROTEIN CCSMST1"/>
    <property type="match status" value="1"/>
</dbReference>
<dbReference type="PANTHER" id="PTHR35268:SF1">
    <property type="entry name" value="UBIQUINOL-CYTOCHROME-C REDUCTASE COMPLEX ASSEMBLY FACTOR 4"/>
    <property type="match status" value="1"/>
</dbReference>
<dbReference type="Pfam" id="PF15013">
    <property type="entry name" value="CCSMST1"/>
    <property type="match status" value="1"/>
</dbReference>
<dbReference type="PRINTS" id="PR02042">
    <property type="entry name" value="CCSMST1"/>
</dbReference>
<feature type="signal peptide" evidence="2">
    <location>
        <begin position="1"/>
        <end position="18"/>
    </location>
</feature>
<feature type="chain" id="PRO_0000348605" description="Ubiquinol-cytochrome-c reductase complex assembly factor 4">
    <location>
        <begin position="19"/>
        <end position="113"/>
    </location>
</feature>
<feature type="topological domain" description="Mitochondrial matrix" evidence="1">
    <location>
        <begin position="19"/>
        <end position="72"/>
    </location>
</feature>
<feature type="transmembrane region" description="Helical" evidence="2">
    <location>
        <begin position="73"/>
        <end position="89"/>
    </location>
</feature>
<feature type="topological domain" description="Mitochondrial intermembrane" evidence="1">
    <location>
        <begin position="90"/>
        <end position="113"/>
    </location>
</feature>
<feature type="sequence conflict" description="In Ref. 2; AAI54859." evidence="3" ref="2">
    <original>I</original>
    <variation>S</variation>
    <location>
        <position position="38"/>
    </location>
</feature>
<feature type="sequence conflict" description="In Ref. 2; AAI54859." evidence="3" ref="2">
    <original>D</original>
    <variation>E</variation>
    <location>
        <position position="94"/>
    </location>
</feature>
<protein>
    <recommendedName>
        <fullName>Ubiquinol-cytochrome-c reductase complex assembly factor 4</fullName>
    </recommendedName>
    <alternativeName>
        <fullName>Protein ccsmst1</fullName>
    </alternativeName>
</protein>
<accession>A8WGU8</accession>
<accession>Q28GZ1</accession>
<comment type="function">
    <text evidence="1">Required for the assembly and stability of the mitochondrial ubiquinol-cytochrome c reductase complex (complex III (CIII) or cytochrome b-c1 complex), a multisubunit transmembrane complex that is part of the mitochondrial electron transport chain (ETC) which drives oxidative phosphorylation.</text>
</comment>
<comment type="subcellular location">
    <subcellularLocation>
        <location evidence="1">Mitochondrion inner membrane</location>
        <topology evidence="3">Single-pass type I membrane protein</topology>
    </subcellularLocation>
</comment>
<comment type="similarity">
    <text evidence="3">Belongs to the UQCC4 family.</text>
</comment>
<keyword id="KW-0249">Electron transport</keyword>
<keyword id="KW-0472">Membrane</keyword>
<keyword id="KW-0496">Mitochondrion</keyword>
<keyword id="KW-0999">Mitochondrion inner membrane</keyword>
<keyword id="KW-1185">Reference proteome</keyword>
<keyword id="KW-0679">Respiratory chain</keyword>
<keyword id="KW-0732">Signal</keyword>
<keyword id="KW-0812">Transmembrane</keyword>
<keyword id="KW-1133">Transmembrane helix</keyword>
<keyword id="KW-0813">Transport</keyword>